<gene>
    <name type="ordered locus">Rv0885</name>
    <name type="ORF">MTCY31.13</name>
</gene>
<reference key="1">
    <citation type="journal article" date="1998" name="Nature">
        <title>Deciphering the biology of Mycobacterium tuberculosis from the complete genome sequence.</title>
        <authorList>
            <person name="Cole S.T."/>
            <person name="Brosch R."/>
            <person name="Parkhill J."/>
            <person name="Garnier T."/>
            <person name="Churcher C.M."/>
            <person name="Harris D.E."/>
            <person name="Gordon S.V."/>
            <person name="Eiglmeier K."/>
            <person name="Gas S."/>
            <person name="Barry C.E. III"/>
            <person name="Tekaia F."/>
            <person name="Badcock K."/>
            <person name="Basham D."/>
            <person name="Brown D."/>
            <person name="Chillingworth T."/>
            <person name="Connor R."/>
            <person name="Davies R.M."/>
            <person name="Devlin K."/>
            <person name="Feltwell T."/>
            <person name="Gentles S."/>
            <person name="Hamlin N."/>
            <person name="Holroyd S."/>
            <person name="Hornsby T."/>
            <person name="Jagels K."/>
            <person name="Krogh A."/>
            <person name="McLean J."/>
            <person name="Moule S."/>
            <person name="Murphy L.D."/>
            <person name="Oliver S."/>
            <person name="Osborne J."/>
            <person name="Quail M.A."/>
            <person name="Rajandream M.A."/>
            <person name="Rogers J."/>
            <person name="Rutter S."/>
            <person name="Seeger K."/>
            <person name="Skelton S."/>
            <person name="Squares S."/>
            <person name="Squares R."/>
            <person name="Sulston J.E."/>
            <person name="Taylor K."/>
            <person name="Whitehead S."/>
            <person name="Barrell B.G."/>
        </authorList>
    </citation>
    <scope>NUCLEOTIDE SEQUENCE [LARGE SCALE GENOMIC DNA]</scope>
    <source>
        <strain>ATCC 25618 / H37Rv</strain>
    </source>
</reference>
<reference key="2">
    <citation type="journal article" date="2011" name="Mol. Cell. Proteomics">
        <title>Proteogenomic analysis of Mycobacterium tuberculosis by high resolution mass spectrometry.</title>
        <authorList>
            <person name="Kelkar D.S."/>
            <person name="Kumar D."/>
            <person name="Kumar P."/>
            <person name="Balakrishnan L."/>
            <person name="Muthusamy B."/>
            <person name="Yadav A.K."/>
            <person name="Shrivastava P."/>
            <person name="Marimuthu A."/>
            <person name="Anand S."/>
            <person name="Sundaram H."/>
            <person name="Kingsbury R."/>
            <person name="Harsha H.C."/>
            <person name="Nair B."/>
            <person name="Prasad T.S."/>
            <person name="Chauhan D.S."/>
            <person name="Katoch K."/>
            <person name="Katoch V.M."/>
            <person name="Kumar P."/>
            <person name="Chaerkady R."/>
            <person name="Ramachandran S."/>
            <person name="Dash D."/>
            <person name="Pandey A."/>
        </authorList>
    </citation>
    <scope>IDENTIFICATION BY MASS SPECTROMETRY [LARGE SCALE ANALYSIS]</scope>
    <source>
        <strain>ATCC 25618 / H37Rv</strain>
    </source>
</reference>
<proteinExistence type="evidence at protein level"/>
<comment type="subcellular location">
    <subcellularLocation>
        <location evidence="2">Cell membrane</location>
        <topology evidence="2">Multi-pass membrane protein</topology>
    </subcellularLocation>
</comment>
<sequence length="340" mass="39798">MDRTRIVRRWRRNMDVADDAEYVEMLATLSEGSVRRNFNPYTDIDWESPEFAVTDNDPRWILPATDPLGRHPWYQAQSRERQIEIGMWRQANVAKVGLHFESILIRGLMNYTFWMPNGSPEYRYCLHESVEECNHTMMFQEMVNRVGADVPGLPRRLRWVSPLVPLVAGPLPVAFFIGVLAGEEPIDHTQKNVLREGKSLHPIMERVMSIHVAEEARHISFAHEYLRKRLPRLTRMQRFWISLYFPLTMRSLCNAIVVPPKAFWEEFDIPREVKKELFFGSPESRKWLCDMFADARMLAHDTGLMNPIARLVWRLCKIDGKPSRYRSEPQRQHLAAAPAA</sequence>
<keyword id="KW-1003">Cell membrane</keyword>
<keyword id="KW-0472">Membrane</keyword>
<keyword id="KW-1185">Reference proteome</keyword>
<keyword id="KW-0812">Transmembrane</keyword>
<keyword id="KW-1133">Transmembrane helix</keyword>
<organism>
    <name type="scientific">Mycobacterium tuberculosis (strain ATCC 25618 / H37Rv)</name>
    <dbReference type="NCBI Taxonomy" id="83332"/>
    <lineage>
        <taxon>Bacteria</taxon>
        <taxon>Bacillati</taxon>
        <taxon>Actinomycetota</taxon>
        <taxon>Actinomycetes</taxon>
        <taxon>Mycobacteriales</taxon>
        <taxon>Mycobacteriaceae</taxon>
        <taxon>Mycobacterium</taxon>
        <taxon>Mycobacterium tuberculosis complex</taxon>
    </lineage>
</organism>
<feature type="chain" id="PRO_0000103727" description="Uncharacterized protein Rv0885">
    <location>
        <begin position="1"/>
        <end position="340"/>
    </location>
</feature>
<feature type="transmembrane region" description="Helical" evidence="1">
    <location>
        <begin position="162"/>
        <end position="182"/>
    </location>
</feature>
<feature type="transmembrane region" description="Helical" evidence="1">
    <location>
        <begin position="239"/>
        <end position="259"/>
    </location>
</feature>
<dbReference type="EMBL" id="AL123456">
    <property type="protein sequence ID" value="CCP43633.1"/>
    <property type="molecule type" value="Genomic_DNA"/>
</dbReference>
<dbReference type="PIR" id="B70781">
    <property type="entry name" value="B70781"/>
</dbReference>
<dbReference type="RefSeq" id="NP_215400.1">
    <property type="nucleotide sequence ID" value="NC_000962.3"/>
</dbReference>
<dbReference type="RefSeq" id="WP_003404627.1">
    <property type="nucleotide sequence ID" value="NZ_NVQJ01000001.1"/>
</dbReference>
<dbReference type="STRING" id="83332.Rv0885"/>
<dbReference type="PaxDb" id="83332-Rv0885"/>
<dbReference type="DNASU" id="885285"/>
<dbReference type="GeneID" id="885285"/>
<dbReference type="KEGG" id="mtu:Rv0885"/>
<dbReference type="KEGG" id="mtv:RVBD_0885"/>
<dbReference type="TubercuList" id="Rv0885"/>
<dbReference type="eggNOG" id="COG3396">
    <property type="taxonomic scope" value="Bacteria"/>
</dbReference>
<dbReference type="InParanoid" id="P9WKQ5"/>
<dbReference type="OrthoDB" id="5138986at2"/>
<dbReference type="Proteomes" id="UP000001584">
    <property type="component" value="Chromosome"/>
</dbReference>
<dbReference type="GO" id="GO:0005886">
    <property type="term" value="C:plasma membrane"/>
    <property type="evidence" value="ECO:0007669"/>
    <property type="project" value="UniProtKB-SubCell"/>
</dbReference>
<dbReference type="GO" id="GO:0016491">
    <property type="term" value="F:oxidoreductase activity"/>
    <property type="evidence" value="ECO:0007669"/>
    <property type="project" value="InterPro"/>
</dbReference>
<dbReference type="Gene3D" id="1.10.620.20">
    <property type="entry name" value="Ribonucleotide Reductase, subunit A"/>
    <property type="match status" value="1"/>
</dbReference>
<dbReference type="InterPro" id="IPR025859">
    <property type="entry name" value="AurF/CmlI"/>
</dbReference>
<dbReference type="InterPro" id="IPR009078">
    <property type="entry name" value="Ferritin-like_SF"/>
</dbReference>
<dbReference type="InterPro" id="IPR012348">
    <property type="entry name" value="RNR-like"/>
</dbReference>
<dbReference type="Pfam" id="PF11583">
    <property type="entry name" value="AurF"/>
    <property type="match status" value="1"/>
</dbReference>
<dbReference type="SUPFAM" id="SSF47240">
    <property type="entry name" value="Ferritin-like"/>
    <property type="match status" value="1"/>
</dbReference>
<accession>P9WKQ5</accession>
<accession>L0T7T2</accession>
<accession>P0A5D5</accession>
<accession>Q10546</accession>
<evidence type="ECO:0000255" key="1"/>
<evidence type="ECO:0000305" key="2"/>
<name>Y885_MYCTU</name>
<protein>
    <recommendedName>
        <fullName>Uncharacterized protein Rv0885</fullName>
    </recommendedName>
</protein>